<evidence type="ECO:0000250" key="1"/>
<evidence type="ECO:0000255" key="2"/>
<evidence type="ECO:0000255" key="3">
    <source>
        <dbReference type="PROSITE-ProRule" id="PRU01097"/>
    </source>
</evidence>
<evidence type="ECO:0000255" key="4">
    <source>
        <dbReference type="PROSITE-ProRule" id="PRU01099"/>
    </source>
</evidence>
<evidence type="ECO:0000255" key="5">
    <source>
        <dbReference type="PROSITE-ProRule" id="PRU10062"/>
    </source>
</evidence>
<evidence type="ECO:0000256" key="6">
    <source>
        <dbReference type="SAM" id="MobiDB-lite"/>
    </source>
</evidence>
<evidence type="ECO:0000269" key="7">
    <source>
    </source>
</evidence>
<evidence type="ECO:0000305" key="8"/>
<sequence>MRLGVALSTIAVLLTATSARNLDKRQWGWPNFGGGNGGNGGNGGKTINDYKREQGAGRDIHVYAPSNLAPNSPLLLSLHGMDQDPNYQQSNTHWETLADSEGFVVVYPRGGTGMSTWDIQGTKDTQWVSQIIDQMKKEYNIDTKRVYLSGFSMGGMFTYHAMSQIANKIAAFAPCSGPNVFGASKAQRPVPIFHVHGTNDDVLNYQQVEGFLKNYRDQFHCPSQADTKTNYPNRENPNATLYTWGPCDKGVYIKHLKLQGRGHSPSSADIQDIWDFVSQWTVDGPVSASGNGGGNTTPTNPSTGGNGNGNGGGNTTPTNPSTGGNGNGNGGSTDKCSSNITKQGYKCCASNCEVVYTDSDGDWGVENDQWCGCGNRVTVGSGTCSAKILQQGYKCCPSGCIIYYTDEDGTWGVNGEEWCGCGSGSSSTGGGNDAPSSGSGYQGANGTNFCNNAKHSGESVTVTSNKVGDINGIGYELWADSGNNSATFYDDGSFSCSFQRAKDYLCRSGLSFDSTKTHKQIGHIYAEFKLVKQNIQNVDYSYVGIYGWTRNPLVEFYVVDNWLSQWRPGDWVGNKKHGDFTIGGAQYTVYENTRYGPSIDGDTNFKQYFSIRQQPRDCGTIDITAHFEQWEKLGMTMGKMHEAKVLGEAGSNNGGTSGTADFPFAKVYVKN</sequence>
<keyword id="KW-0119">Carbohydrate metabolism</keyword>
<keyword id="KW-0325">Glycoprotein</keyword>
<keyword id="KW-0326">Glycosidase</keyword>
<keyword id="KW-0378">Hydrolase</keyword>
<keyword id="KW-0624">Polysaccharide degradation</keyword>
<keyword id="KW-0677">Repeat</keyword>
<keyword id="KW-0964">Secreted</keyword>
<keyword id="KW-0732">Signal</keyword>
<keyword id="KW-0858">Xylan degradation</keyword>
<reference key="1">
    <citation type="journal article" date="2010" name="Appl. Microbiol. Biotechnol.">
        <title>Molecular cloning and characterization of a bifunctional xylanolytic enzyme from Neocallimastix patriciarum.</title>
        <authorList>
            <person name="Pai C.K."/>
            <person name="Wu Z.Y."/>
            <person name="Chen M.J."/>
            <person name="Zeng Y.F."/>
            <person name="Chen J.W."/>
            <person name="Duan C.H."/>
            <person name="Li M.L."/>
            <person name="Liu J.R."/>
        </authorList>
    </citation>
    <scope>NUCLEOTIDE SEQUENCE [MRNA]</scope>
    <scope>SUBCELLULAR LOCATION</scope>
    <scope>FUNCTION</scope>
    <scope>CATALYTIC ACTIVITY</scope>
    <scope>BIOPHISICOCHEMICAL PROPERTIES</scope>
    <source>
        <strain>S20</strain>
    </source>
</reference>
<gene>
    <name type="primary">xynS20E</name>
</gene>
<name>XS20E_NEOPA</name>
<feature type="signal peptide" evidence="2">
    <location>
        <begin position="1"/>
        <end position="19"/>
    </location>
</feature>
<feature type="chain" id="PRO_0000429665" description="Bifunctional acetylxylan esterase/xylanase XynS20E">
    <location>
        <begin position="20"/>
        <end position="671"/>
    </location>
</feature>
<feature type="domain" description="CBM10 1" evidence="4">
    <location>
        <begin position="335"/>
        <end position="374"/>
    </location>
</feature>
<feature type="domain" description="CBM10 2" evidence="4">
    <location>
        <begin position="383"/>
        <end position="422"/>
    </location>
</feature>
<feature type="domain" description="GH11" evidence="3">
    <location>
        <begin position="461"/>
        <end position="661"/>
    </location>
</feature>
<feature type="region of interest" description="Acetylxylan esterase">
    <location>
        <begin position="54"/>
        <end position="279"/>
    </location>
</feature>
<feature type="region of interest" description="Disordered" evidence="6">
    <location>
        <begin position="285"/>
        <end position="328"/>
    </location>
</feature>
<feature type="compositionally biased region" description="Gly residues" evidence="6">
    <location>
        <begin position="304"/>
        <end position="314"/>
    </location>
</feature>
<feature type="active site" description="Charge relay system" evidence="1">
    <location>
        <position position="152"/>
    </location>
</feature>
<feature type="active site" description="Nucleophile" evidence="5">
    <location>
        <position position="555"/>
    </location>
</feature>
<feature type="active site" description="Proton donor" evidence="1">
    <location>
        <position position="648"/>
    </location>
</feature>
<feature type="glycosylation site" description="N-linked (GlcNAc...) asparagine" evidence="2">
    <location>
        <position position="238"/>
    </location>
</feature>
<feature type="glycosylation site" description="N-linked (GlcNAc...) asparagine" evidence="2">
    <location>
        <position position="339"/>
    </location>
</feature>
<feature type="glycosylation site" description="N-linked (GlcNAc...) asparagine" evidence="2">
    <location>
        <position position="445"/>
    </location>
</feature>
<feature type="glycosylation site" description="N-linked (GlcNAc...) asparagine" evidence="2">
    <location>
        <position position="483"/>
    </location>
</feature>
<proteinExistence type="evidence at protein level"/>
<comment type="function">
    <text evidence="7">Bifunctional acetylxylan esterase/xylanase involved in the hydrolysis of xylan, a major structural heterogeneous polysaccharide found in plant biomass representing the second most abundant polysaccharide in the biosphere, after cellulose. Degrades xylan from acetylxylan, beechwood, birchwood, and oat spelt, and releases acetate from 4-methylumbelliferyl acetate and beta-D-xylose tetraacetate. No activity is observed against carboxy methyl cellulose, beta-glucan, p-nitrophenol acetate, p-nitrophenol laurate, p-nitrophenol myristate, p-nitrophenol, palmitate, or beta-naphthol acetate.</text>
</comment>
<comment type="catalytic activity">
    <reaction evidence="7">
        <text>Deacetylation of xylans and xylo-oligosaccharides.</text>
        <dbReference type="EC" id="3.1.1.72"/>
    </reaction>
</comment>
<comment type="catalytic activity">
    <reaction evidence="7">
        <text>Endohydrolysis of (1-&gt;4)-beta-D-xylosidic linkages in xylans.</text>
        <dbReference type="EC" id="3.2.1.8"/>
    </reaction>
</comment>
<comment type="biophysicochemical properties">
    <kinetics>
        <KM>1.48 mg/ml for birchwood xylan for endo-1,4-beta-xylanase activity</KM>
        <KM>16.72 mg/ml for birchwood xylan for acetylxylan esterase activity</KM>
        <Vmax>5.15 umol/min/mg enzyme toward birchwood xylan for acetylxylan esterase activity</Vmax>
        <Vmax>153.27 umol/min/mg enzyme toward birchwood xylan for Endo-1,4-beta-xylanase activity</Vmax>
    </kinetics>
    <phDependence>
        <text>Optimum pH is 5.8 for acetylxylan esterase activity, and 5.8 for endo-1,4-beta-xylanase activity.</text>
    </phDependence>
    <temperatureDependence>
        <text>Optimum temperature is 58 degrees Celsius for acetylxylan esterase activity, and 49 degrees Celsius for endo-1,4-beta-xylanase activity.</text>
    </temperatureDependence>
</comment>
<comment type="pathway">
    <text>Glycan degradation; xylan degradation.</text>
</comment>
<comment type="subcellular location">
    <subcellularLocation>
        <location evidence="7">Secreted</location>
    </subcellularLocation>
</comment>
<comment type="similarity">
    <text evidence="8">In the N-terminal section; belongs to the axeA family.</text>
</comment>
<comment type="similarity">
    <text evidence="8">In the C-terminal section; belongs to the glycosyl hydrolase 11 (cellulase G) family.</text>
</comment>
<dbReference type="EC" id="3.1.1.72"/>
<dbReference type="EC" id="3.2.1.8"/>
<dbReference type="EMBL" id="FJ529209">
    <property type="protein sequence ID" value="ACL68347.1"/>
    <property type="molecule type" value="mRNA"/>
</dbReference>
<dbReference type="SMR" id="B8YG19"/>
<dbReference type="CAZy" id="GH11">
    <property type="family name" value="Glycoside Hydrolase Family 11"/>
</dbReference>
<dbReference type="ESTHER" id="neopa-xs20e">
    <property type="family name" value="Esterase_phb"/>
</dbReference>
<dbReference type="GlyCosmos" id="B8YG19">
    <property type="glycosylation" value="4 sites, No reported glycans"/>
</dbReference>
<dbReference type="BRENDA" id="3.1.1.72">
    <property type="organism ID" value="6834"/>
</dbReference>
<dbReference type="UniPathway" id="UPA00114"/>
<dbReference type="GO" id="GO:0005576">
    <property type="term" value="C:extracellular region"/>
    <property type="evidence" value="ECO:0007669"/>
    <property type="project" value="UniProtKB-SubCell"/>
</dbReference>
<dbReference type="GO" id="GO:0046555">
    <property type="term" value="F:acetylxylan esterase activity"/>
    <property type="evidence" value="ECO:0007669"/>
    <property type="project" value="UniProtKB-EC"/>
</dbReference>
<dbReference type="GO" id="GO:0031176">
    <property type="term" value="F:endo-1,4-beta-xylanase activity"/>
    <property type="evidence" value="ECO:0007669"/>
    <property type="project" value="UniProtKB-EC"/>
</dbReference>
<dbReference type="GO" id="GO:0045493">
    <property type="term" value="P:xylan catabolic process"/>
    <property type="evidence" value="ECO:0007669"/>
    <property type="project" value="UniProtKB-UniPathway"/>
</dbReference>
<dbReference type="Gene3D" id="2.60.120.180">
    <property type="match status" value="1"/>
</dbReference>
<dbReference type="Gene3D" id="3.40.50.1820">
    <property type="entry name" value="alpha/beta hydrolase"/>
    <property type="match status" value="1"/>
</dbReference>
<dbReference type="Gene3D" id="3.90.1220.10">
    <property type="entry name" value="Cellulose docking domain, dockering"/>
    <property type="match status" value="2"/>
</dbReference>
<dbReference type="InterPro" id="IPR029058">
    <property type="entry name" value="AB_hydrolase_fold"/>
</dbReference>
<dbReference type="InterPro" id="IPR002883">
    <property type="entry name" value="CBM10/Dockerin_dom"/>
</dbReference>
<dbReference type="InterPro" id="IPR013320">
    <property type="entry name" value="ConA-like_dom_sf"/>
</dbReference>
<dbReference type="InterPro" id="IPR009034">
    <property type="entry name" value="Dockerin_dom_fun_sf"/>
</dbReference>
<dbReference type="InterPro" id="IPR013319">
    <property type="entry name" value="GH11/12"/>
</dbReference>
<dbReference type="InterPro" id="IPR018208">
    <property type="entry name" value="GH11_AS_1"/>
</dbReference>
<dbReference type="InterPro" id="IPR033123">
    <property type="entry name" value="GH11_dom"/>
</dbReference>
<dbReference type="InterPro" id="IPR001137">
    <property type="entry name" value="Glyco_hydro_11"/>
</dbReference>
<dbReference type="InterPro" id="IPR003140">
    <property type="entry name" value="PLipase/COase/thioEstase"/>
</dbReference>
<dbReference type="PANTHER" id="PTHR46828">
    <property type="entry name" value="ENDO-1,4-BETA-XYLANASE A-RELATED"/>
    <property type="match status" value="1"/>
</dbReference>
<dbReference type="PANTHER" id="PTHR46828:SF2">
    <property type="entry name" value="ENDO-1,4-BETA-XYLANASE A-RELATED"/>
    <property type="match status" value="1"/>
</dbReference>
<dbReference type="Pfam" id="PF02230">
    <property type="entry name" value="Abhydrolase_2"/>
    <property type="match status" value="1"/>
</dbReference>
<dbReference type="Pfam" id="PF02013">
    <property type="entry name" value="CBM_10"/>
    <property type="match status" value="2"/>
</dbReference>
<dbReference type="Pfam" id="PF00457">
    <property type="entry name" value="Glyco_hydro_11"/>
    <property type="match status" value="1"/>
</dbReference>
<dbReference type="PRINTS" id="PR00911">
    <property type="entry name" value="GLHYDRLASE11"/>
</dbReference>
<dbReference type="SUPFAM" id="SSF53474">
    <property type="entry name" value="alpha/beta-Hydrolases"/>
    <property type="match status" value="1"/>
</dbReference>
<dbReference type="SUPFAM" id="SSF64571">
    <property type="entry name" value="Cellulose docking domain, dockering"/>
    <property type="match status" value="2"/>
</dbReference>
<dbReference type="SUPFAM" id="SSF49899">
    <property type="entry name" value="Concanavalin A-like lectins/glucanases"/>
    <property type="match status" value="1"/>
</dbReference>
<dbReference type="PROSITE" id="PS51763">
    <property type="entry name" value="CBM10"/>
    <property type="match status" value="2"/>
</dbReference>
<dbReference type="PROSITE" id="PS00776">
    <property type="entry name" value="GH11_1"/>
    <property type="match status" value="1"/>
</dbReference>
<dbReference type="PROSITE" id="PS51761">
    <property type="entry name" value="GH11_3"/>
    <property type="match status" value="1"/>
</dbReference>
<organism>
    <name type="scientific">Neocallimastix patriciarum</name>
    <name type="common">Rumen fungus</name>
    <dbReference type="NCBI Taxonomy" id="4758"/>
    <lineage>
        <taxon>Eukaryota</taxon>
        <taxon>Fungi</taxon>
        <taxon>Fungi incertae sedis</taxon>
        <taxon>Chytridiomycota</taxon>
        <taxon>Chytridiomycota incertae sedis</taxon>
        <taxon>Neocallimastigomycetes</taxon>
        <taxon>Neocallimastigales</taxon>
        <taxon>Neocallimastigaceae</taxon>
        <taxon>Neocallimastix</taxon>
    </lineage>
</organism>
<accession>B8YG19</accession>
<protein>
    <recommendedName>
        <fullName>Bifunctional acetylxylan esterase/xylanase XynS20E</fullName>
    </recommendedName>
    <domain>
        <recommendedName>
            <fullName>Acetylxylan esterase</fullName>
            <ecNumber>3.1.1.72</ecNumber>
        </recommendedName>
    </domain>
    <domain>
        <recommendedName>
            <fullName>Endo-1,4-beta-xylanase</fullName>
            <shortName>Xylanase</shortName>
            <ecNumber>3.2.1.8</ecNumber>
        </recommendedName>
        <alternativeName>
            <fullName>1,4-beta-D-xylan xylanohydrolase</fullName>
        </alternativeName>
    </domain>
</protein>